<accession>Q6HPM5</accession>
<dbReference type="EMBL" id="AE017355">
    <property type="protein sequence ID" value="AAT63890.1"/>
    <property type="molecule type" value="Genomic_DNA"/>
</dbReference>
<dbReference type="RefSeq" id="WP_000079986.1">
    <property type="nucleotide sequence ID" value="NC_005957.1"/>
</dbReference>
<dbReference type="RefSeq" id="YP_034495.1">
    <property type="nucleotide sequence ID" value="NC_005957.1"/>
</dbReference>
<dbReference type="SMR" id="Q6HPM5"/>
<dbReference type="GeneID" id="93010909"/>
<dbReference type="KEGG" id="btk:BT9727_0139"/>
<dbReference type="PATRIC" id="fig|281309.8.peg.141"/>
<dbReference type="HOGENOM" id="CLU_046483_2_1_9"/>
<dbReference type="PRO" id="PR:Q6HPM5"/>
<dbReference type="Proteomes" id="UP000001301">
    <property type="component" value="Chromosome"/>
</dbReference>
<dbReference type="GO" id="GO:0022627">
    <property type="term" value="C:cytosolic small ribosomal subunit"/>
    <property type="evidence" value="ECO:0007669"/>
    <property type="project" value="TreeGrafter"/>
</dbReference>
<dbReference type="GO" id="GO:0003723">
    <property type="term" value="F:RNA binding"/>
    <property type="evidence" value="ECO:0007669"/>
    <property type="project" value="TreeGrafter"/>
</dbReference>
<dbReference type="GO" id="GO:0003735">
    <property type="term" value="F:structural constituent of ribosome"/>
    <property type="evidence" value="ECO:0007669"/>
    <property type="project" value="InterPro"/>
</dbReference>
<dbReference type="GO" id="GO:0006412">
    <property type="term" value="P:translation"/>
    <property type="evidence" value="ECO:0007669"/>
    <property type="project" value="UniProtKB-UniRule"/>
</dbReference>
<dbReference type="FunFam" id="3.30.230.10:FF:000001">
    <property type="entry name" value="30S ribosomal protein S9"/>
    <property type="match status" value="1"/>
</dbReference>
<dbReference type="Gene3D" id="3.30.230.10">
    <property type="match status" value="1"/>
</dbReference>
<dbReference type="HAMAP" id="MF_00532_B">
    <property type="entry name" value="Ribosomal_uS9_B"/>
    <property type="match status" value="1"/>
</dbReference>
<dbReference type="InterPro" id="IPR020568">
    <property type="entry name" value="Ribosomal_Su5_D2-typ_SF"/>
</dbReference>
<dbReference type="InterPro" id="IPR000754">
    <property type="entry name" value="Ribosomal_uS9"/>
</dbReference>
<dbReference type="InterPro" id="IPR023035">
    <property type="entry name" value="Ribosomal_uS9_bac/plastid"/>
</dbReference>
<dbReference type="InterPro" id="IPR020574">
    <property type="entry name" value="Ribosomal_uS9_CS"/>
</dbReference>
<dbReference type="InterPro" id="IPR014721">
    <property type="entry name" value="Ribsml_uS5_D2-typ_fold_subgr"/>
</dbReference>
<dbReference type="NCBIfam" id="NF001099">
    <property type="entry name" value="PRK00132.1"/>
    <property type="match status" value="1"/>
</dbReference>
<dbReference type="PANTHER" id="PTHR21569">
    <property type="entry name" value="RIBOSOMAL PROTEIN S9"/>
    <property type="match status" value="1"/>
</dbReference>
<dbReference type="PANTHER" id="PTHR21569:SF1">
    <property type="entry name" value="SMALL RIBOSOMAL SUBUNIT PROTEIN US9M"/>
    <property type="match status" value="1"/>
</dbReference>
<dbReference type="Pfam" id="PF00380">
    <property type="entry name" value="Ribosomal_S9"/>
    <property type="match status" value="1"/>
</dbReference>
<dbReference type="SUPFAM" id="SSF54211">
    <property type="entry name" value="Ribosomal protein S5 domain 2-like"/>
    <property type="match status" value="1"/>
</dbReference>
<dbReference type="PROSITE" id="PS00360">
    <property type="entry name" value="RIBOSOMAL_S9"/>
    <property type="match status" value="1"/>
</dbReference>
<organism>
    <name type="scientific">Bacillus thuringiensis subsp. konkukian (strain 97-27)</name>
    <dbReference type="NCBI Taxonomy" id="281309"/>
    <lineage>
        <taxon>Bacteria</taxon>
        <taxon>Bacillati</taxon>
        <taxon>Bacillota</taxon>
        <taxon>Bacilli</taxon>
        <taxon>Bacillales</taxon>
        <taxon>Bacillaceae</taxon>
        <taxon>Bacillus</taxon>
        <taxon>Bacillus cereus group</taxon>
    </lineage>
</organism>
<reference key="1">
    <citation type="journal article" date="2006" name="J. Bacteriol.">
        <title>Pathogenomic sequence analysis of Bacillus cereus and Bacillus thuringiensis isolates closely related to Bacillus anthracis.</title>
        <authorList>
            <person name="Han C.S."/>
            <person name="Xie G."/>
            <person name="Challacombe J.F."/>
            <person name="Altherr M.R."/>
            <person name="Bhotika S.S."/>
            <person name="Bruce D."/>
            <person name="Campbell C.S."/>
            <person name="Campbell M.L."/>
            <person name="Chen J."/>
            <person name="Chertkov O."/>
            <person name="Cleland C."/>
            <person name="Dimitrijevic M."/>
            <person name="Doggett N.A."/>
            <person name="Fawcett J.J."/>
            <person name="Glavina T."/>
            <person name="Goodwin L.A."/>
            <person name="Hill K.K."/>
            <person name="Hitchcock P."/>
            <person name="Jackson P.J."/>
            <person name="Keim P."/>
            <person name="Kewalramani A.R."/>
            <person name="Longmire J."/>
            <person name="Lucas S."/>
            <person name="Malfatti S."/>
            <person name="McMurry K."/>
            <person name="Meincke L.J."/>
            <person name="Misra M."/>
            <person name="Moseman B.L."/>
            <person name="Mundt M."/>
            <person name="Munk A.C."/>
            <person name="Okinaka R.T."/>
            <person name="Parson-Quintana B."/>
            <person name="Reilly L.P."/>
            <person name="Richardson P."/>
            <person name="Robinson D.L."/>
            <person name="Rubin E."/>
            <person name="Saunders E."/>
            <person name="Tapia R."/>
            <person name="Tesmer J.G."/>
            <person name="Thayer N."/>
            <person name="Thompson L.S."/>
            <person name="Tice H."/>
            <person name="Ticknor L.O."/>
            <person name="Wills P.L."/>
            <person name="Brettin T.S."/>
            <person name="Gilna P."/>
        </authorList>
    </citation>
    <scope>NUCLEOTIDE SEQUENCE [LARGE SCALE GENOMIC DNA]</scope>
    <source>
        <strain>97-27</strain>
    </source>
</reference>
<gene>
    <name evidence="1" type="primary">rpsI</name>
    <name type="ordered locus">BT9727_0139</name>
</gene>
<keyword id="KW-0687">Ribonucleoprotein</keyword>
<keyword id="KW-0689">Ribosomal protein</keyword>
<protein>
    <recommendedName>
        <fullName evidence="1">Small ribosomal subunit protein uS9</fullName>
    </recommendedName>
    <alternativeName>
        <fullName evidence="2">30S ribosomal protein S9</fullName>
    </alternativeName>
</protein>
<evidence type="ECO:0000255" key="1">
    <source>
        <dbReference type="HAMAP-Rule" id="MF_00532"/>
    </source>
</evidence>
<evidence type="ECO:0000305" key="2"/>
<comment type="similarity">
    <text evidence="1">Belongs to the universal ribosomal protein uS9 family.</text>
</comment>
<feature type="chain" id="PRO_1000051164" description="Small ribosomal subunit protein uS9">
    <location>
        <begin position="1"/>
        <end position="130"/>
    </location>
</feature>
<name>RS9_BACHK</name>
<proteinExistence type="inferred from homology"/>
<sequence length="130" mass="14491">MAQVQYYGTGRRKSSVARVRLVPGEGRVIINGRDFENYIPFAALREVVKQPLVATETLGNYDVLVNVNGGGYTGQAGAIRHGISRALLKADPEYRLTLKRAGLLTRDARMKERKKYGLKGARRAPQFSKR</sequence>